<keyword id="KW-0325">Glycoprotein</keyword>
<keyword id="KW-1185">Reference proteome</keyword>
<keyword id="KW-0964">Secreted</keyword>
<keyword id="KW-0732">Signal</keyword>
<proteinExistence type="inferred from homology"/>
<feature type="signal peptide" evidence="1">
    <location>
        <begin position="1"/>
        <end position="15"/>
    </location>
</feature>
<feature type="chain" id="PRO_0000348483" description="Putative uncharacterized protein DDB_G0286451">
    <location>
        <begin position="16"/>
        <end position="80"/>
    </location>
</feature>
<feature type="region of interest" description="Disordered" evidence="2">
    <location>
        <begin position="23"/>
        <end position="52"/>
    </location>
</feature>
<feature type="compositionally biased region" description="Low complexity" evidence="2">
    <location>
        <begin position="23"/>
        <end position="44"/>
    </location>
</feature>
<feature type="glycosylation site" description="N-linked (GlcNAc...) asparagine" evidence="1">
    <location>
        <position position="29"/>
    </location>
</feature>
<feature type="glycosylation site" description="N-linked (GlcNAc...) asparagine" evidence="1">
    <location>
        <position position="30"/>
    </location>
</feature>
<feature type="glycosylation site" description="N-linked (GlcNAc...) asparagine" evidence="1">
    <location>
        <position position="36"/>
    </location>
</feature>
<feature type="glycosylation site" description="N-linked (GlcNAc...) asparagine" evidence="1">
    <location>
        <position position="39"/>
    </location>
</feature>
<feature type="glycosylation site" description="N-linked (GlcNAc...) asparagine" evidence="1">
    <location>
        <position position="64"/>
    </location>
</feature>
<evidence type="ECO:0000255" key="1"/>
<evidence type="ECO:0000256" key="2">
    <source>
        <dbReference type="SAM" id="MobiDB-lite"/>
    </source>
</evidence>
<evidence type="ECO:0000305" key="3"/>
<name>Y5609_DICDI</name>
<reference key="1">
    <citation type="journal article" date="2005" name="Nature">
        <title>The genome of the social amoeba Dictyostelium discoideum.</title>
        <authorList>
            <person name="Eichinger L."/>
            <person name="Pachebat J.A."/>
            <person name="Gloeckner G."/>
            <person name="Rajandream M.A."/>
            <person name="Sucgang R."/>
            <person name="Berriman M."/>
            <person name="Song J."/>
            <person name="Olsen R."/>
            <person name="Szafranski K."/>
            <person name="Xu Q."/>
            <person name="Tunggal B."/>
            <person name="Kummerfeld S."/>
            <person name="Madera M."/>
            <person name="Konfortov B.A."/>
            <person name="Rivero F."/>
            <person name="Bankier A.T."/>
            <person name="Lehmann R."/>
            <person name="Hamlin N."/>
            <person name="Davies R."/>
            <person name="Gaudet P."/>
            <person name="Fey P."/>
            <person name="Pilcher K."/>
            <person name="Chen G."/>
            <person name="Saunders D."/>
            <person name="Sodergren E.J."/>
            <person name="Davis P."/>
            <person name="Kerhornou A."/>
            <person name="Nie X."/>
            <person name="Hall N."/>
            <person name="Anjard C."/>
            <person name="Hemphill L."/>
            <person name="Bason N."/>
            <person name="Farbrother P."/>
            <person name="Desany B."/>
            <person name="Just E."/>
            <person name="Morio T."/>
            <person name="Rost R."/>
            <person name="Churcher C.M."/>
            <person name="Cooper J."/>
            <person name="Haydock S."/>
            <person name="van Driessche N."/>
            <person name="Cronin A."/>
            <person name="Goodhead I."/>
            <person name="Muzny D.M."/>
            <person name="Mourier T."/>
            <person name="Pain A."/>
            <person name="Lu M."/>
            <person name="Harper D."/>
            <person name="Lindsay R."/>
            <person name="Hauser H."/>
            <person name="James K.D."/>
            <person name="Quiles M."/>
            <person name="Madan Babu M."/>
            <person name="Saito T."/>
            <person name="Buchrieser C."/>
            <person name="Wardroper A."/>
            <person name="Felder M."/>
            <person name="Thangavelu M."/>
            <person name="Johnson D."/>
            <person name="Knights A."/>
            <person name="Loulseged H."/>
            <person name="Mungall K.L."/>
            <person name="Oliver K."/>
            <person name="Price C."/>
            <person name="Quail M.A."/>
            <person name="Urushihara H."/>
            <person name="Hernandez J."/>
            <person name="Rabbinowitsch E."/>
            <person name="Steffen D."/>
            <person name="Sanders M."/>
            <person name="Ma J."/>
            <person name="Kohara Y."/>
            <person name="Sharp S."/>
            <person name="Simmonds M.N."/>
            <person name="Spiegler S."/>
            <person name="Tivey A."/>
            <person name="Sugano S."/>
            <person name="White B."/>
            <person name="Walker D."/>
            <person name="Woodward J.R."/>
            <person name="Winckler T."/>
            <person name="Tanaka Y."/>
            <person name="Shaulsky G."/>
            <person name="Schleicher M."/>
            <person name="Weinstock G.M."/>
            <person name="Rosenthal A."/>
            <person name="Cox E.C."/>
            <person name="Chisholm R.L."/>
            <person name="Gibbs R.A."/>
            <person name="Loomis W.F."/>
            <person name="Platzer M."/>
            <person name="Kay R.R."/>
            <person name="Williams J.G."/>
            <person name="Dear P.H."/>
            <person name="Noegel A.A."/>
            <person name="Barrell B.G."/>
            <person name="Kuspa A."/>
        </authorList>
    </citation>
    <scope>NUCLEOTIDE SEQUENCE [LARGE SCALE GENOMIC DNA]</scope>
    <source>
        <strain>AX4</strain>
    </source>
</reference>
<dbReference type="EMBL" id="AAFI02000085">
    <property type="protein sequence ID" value="EAL64250.1"/>
    <property type="molecule type" value="Genomic_DNA"/>
</dbReference>
<dbReference type="RefSeq" id="XP_637752.1">
    <property type="nucleotide sequence ID" value="XM_632660.1"/>
</dbReference>
<dbReference type="GlyGen" id="Q54LS8">
    <property type="glycosylation" value="5 sites"/>
</dbReference>
<dbReference type="PaxDb" id="44689-DDB0215609"/>
<dbReference type="EnsemblProtists" id="EAL64250">
    <property type="protein sequence ID" value="EAL64250"/>
    <property type="gene ID" value="DDB_G0286451"/>
</dbReference>
<dbReference type="GeneID" id="8625618"/>
<dbReference type="KEGG" id="ddi:DDB_G0286451"/>
<dbReference type="HOGENOM" id="CLU_2594816_0_0_1"/>
<dbReference type="InParanoid" id="Q54LS8"/>
<dbReference type="PRO" id="PR:Q54LS8"/>
<dbReference type="Proteomes" id="UP000002195">
    <property type="component" value="Chromosome 4"/>
</dbReference>
<dbReference type="GO" id="GO:0005576">
    <property type="term" value="C:extracellular region"/>
    <property type="evidence" value="ECO:0007669"/>
    <property type="project" value="UniProtKB-SubCell"/>
</dbReference>
<accession>Q54LS8</accession>
<sequence length="80" mass="8731">MEVIVVIVVIVVVIAIVIVIDSNSNSNSNNSSDSSNESNNSDSSKNGGSDIYQFSSSNKPFLHNFSNNNPNYNINAYFRI</sequence>
<comment type="subcellular location">
    <subcellularLocation>
        <location evidence="3">Secreted</location>
    </subcellularLocation>
</comment>
<gene>
    <name type="ORF">DDB_G0286451</name>
</gene>
<organism>
    <name type="scientific">Dictyostelium discoideum</name>
    <name type="common">Social amoeba</name>
    <dbReference type="NCBI Taxonomy" id="44689"/>
    <lineage>
        <taxon>Eukaryota</taxon>
        <taxon>Amoebozoa</taxon>
        <taxon>Evosea</taxon>
        <taxon>Eumycetozoa</taxon>
        <taxon>Dictyostelia</taxon>
        <taxon>Dictyosteliales</taxon>
        <taxon>Dictyosteliaceae</taxon>
        <taxon>Dictyostelium</taxon>
    </lineage>
</organism>
<protein>
    <recommendedName>
        <fullName>Putative uncharacterized protein DDB_G0286451</fullName>
    </recommendedName>
</protein>